<name>TXM1A_ETHRU</name>
<sequence>MAVILKHLAIILLVFVIEIKMGQGSQIERRSSGVTHEMLSSISKPEKRFAFEDTVANERSPQITFSTDWGQRKRSVNEDREAAERERSPQMKRSEHEEQLMAKDEMKRFQEERNPSSDDKIAIDKRSPRYLPTII</sequence>
<evidence type="ECO:0000255" key="1"/>
<evidence type="ECO:0000256" key="2">
    <source>
        <dbReference type="SAM" id="MobiDB-lite"/>
    </source>
</evidence>
<evidence type="ECO:0000303" key="3">
    <source>
    </source>
</evidence>
<evidence type="ECO:0000305" key="4"/>
<evidence type="ECO:0000305" key="5">
    <source>
    </source>
</evidence>
<reference key="1">
    <citation type="journal article" date="2014" name="Mol. Biol. Evol.">
        <title>Clawing through evolution: toxin diversification and convergence in the ancient lineage Chilopoda (centipedes).</title>
        <authorList>
            <person name="Undheim E.A."/>
            <person name="Jones A."/>
            <person name="Clauser K.R."/>
            <person name="Holland J.W."/>
            <person name="Pineda S.S."/>
            <person name="King G.F."/>
            <person name="Fry B.G."/>
        </authorList>
    </citation>
    <scope>NUCLEOTIDE SEQUENCE [MRNA]</scope>
    <scope>NOMENCLATURE</scope>
    <source>
        <tissue>Venom gland</tissue>
    </source>
</reference>
<protein>
    <recommendedName>
        <fullName evidence="3">U-scoloptoxin(22)-Er1a</fullName>
        <shortName evidence="3">U-SLPTX(22)-Er1a</shortName>
    </recommendedName>
</protein>
<organism>
    <name type="scientific">Ethmostigmus rubripes</name>
    <name type="common">Giant centipede</name>
    <dbReference type="NCBI Taxonomy" id="62613"/>
    <lineage>
        <taxon>Eukaryota</taxon>
        <taxon>Metazoa</taxon>
        <taxon>Ecdysozoa</taxon>
        <taxon>Arthropoda</taxon>
        <taxon>Myriapoda</taxon>
        <taxon>Chilopoda</taxon>
        <taxon>Pleurostigmophora</taxon>
        <taxon>Scolopendromorpha</taxon>
        <taxon>Scolopendridae</taxon>
        <taxon>Ethmostigmus</taxon>
    </lineage>
</organism>
<feature type="signal peptide" evidence="1">
    <location>
        <begin position="1"/>
        <end position="24"/>
    </location>
</feature>
<feature type="chain" id="PRO_0000446833" description="U-scoloptoxin(22)-Er1a" evidence="4">
    <location>
        <begin position="25"/>
        <end position="135"/>
    </location>
</feature>
<feature type="region of interest" description="Disordered" evidence="2">
    <location>
        <begin position="61"/>
        <end position="135"/>
    </location>
</feature>
<feature type="compositionally biased region" description="Basic and acidic residues" evidence="2">
    <location>
        <begin position="75"/>
        <end position="127"/>
    </location>
</feature>
<accession>P0DQF5</accession>
<proteinExistence type="evidence at transcript level"/>
<dbReference type="SMR" id="P0DQF5"/>
<dbReference type="GO" id="GO:0005576">
    <property type="term" value="C:extracellular region"/>
    <property type="evidence" value="ECO:0007669"/>
    <property type="project" value="UniProtKB-SubCell"/>
</dbReference>
<dbReference type="GO" id="GO:0090729">
    <property type="term" value="F:toxin activity"/>
    <property type="evidence" value="ECO:0007669"/>
    <property type="project" value="UniProtKB-KW"/>
</dbReference>
<keyword id="KW-0964">Secreted</keyword>
<keyword id="KW-0732">Signal</keyword>
<keyword id="KW-0800">Toxin</keyword>
<comment type="subcellular location">
    <subcellularLocation>
        <location evidence="5">Secreted</location>
    </subcellularLocation>
</comment>
<comment type="tissue specificity">
    <text evidence="5">Expressed by the venom gland.</text>
</comment>
<comment type="similarity">
    <text evidence="4">Belongs to the scoloptoxin-22 family.</text>
</comment>
<comment type="caution">
    <text evidence="5">All E.rubripes family members described in 'Undeheim et al., 2014' have not been imported into UniProtKB. Please, refer to this paper to access them.</text>
</comment>
<comment type="online information" name="National Center for Biotechnology Information (NCBI)">
    <link uri="https://www.ncbi.nlm.nih.gov/nuccore/GASI01000170"/>
</comment>